<dbReference type="EMBL" id="AK297977">
    <property type="protein sequence ID" value="BAG60287.1"/>
    <property type="molecule type" value="mRNA"/>
</dbReference>
<dbReference type="EMBL" id="AC005261">
    <property type="status" value="NOT_ANNOTATED_CDS"/>
    <property type="molecule type" value="Genomic_DNA"/>
</dbReference>
<dbReference type="EMBL" id="CR936617">
    <property type="protein sequence ID" value="CAI56760.1"/>
    <property type="status" value="ALT_INIT"/>
    <property type="molecule type" value="mRNA"/>
</dbReference>
<dbReference type="CCDS" id="CCDS46207.1">
    <molecule id="Q5CZA5-1"/>
</dbReference>
<dbReference type="CCDS" id="CCDS46208.1">
    <molecule id="Q5CZA5-2"/>
</dbReference>
<dbReference type="RefSeq" id="NP_001018857.2">
    <molecule id="Q5CZA5-1"/>
    <property type="nucleotide sequence ID" value="NM_001023563.4"/>
</dbReference>
<dbReference type="RefSeq" id="NP_001138550.1">
    <molecule id="Q5CZA5-2"/>
    <property type="nucleotide sequence ID" value="NM_001145078.2"/>
</dbReference>
<dbReference type="SMR" id="Q5CZA5"/>
<dbReference type="BioGRID" id="133751">
    <property type="interactions" value="7"/>
</dbReference>
<dbReference type="FunCoup" id="Q5CZA5">
    <property type="interactions" value="42"/>
</dbReference>
<dbReference type="IntAct" id="Q5CZA5">
    <property type="interactions" value="3"/>
</dbReference>
<dbReference type="STRING" id="9606.ENSP00000412999"/>
<dbReference type="iPTMnet" id="Q5CZA5"/>
<dbReference type="PhosphoSitePlus" id="Q5CZA5"/>
<dbReference type="BioMuta" id="ZNF805"/>
<dbReference type="DMDM" id="327478550"/>
<dbReference type="jPOST" id="Q5CZA5"/>
<dbReference type="MassIVE" id="Q5CZA5"/>
<dbReference type="PaxDb" id="9606-ENSP00000412999"/>
<dbReference type="PeptideAtlas" id="Q5CZA5"/>
<dbReference type="ProteomicsDB" id="62731">
    <molecule id="Q5CZA5-1"/>
</dbReference>
<dbReference type="ProteomicsDB" id="62732">
    <molecule id="Q5CZA5-2"/>
</dbReference>
<dbReference type="Antibodypedia" id="67646">
    <property type="antibodies" value="65 antibodies from 11 providers"/>
</dbReference>
<dbReference type="DNASU" id="390980"/>
<dbReference type="Ensembl" id="ENST00000354309.4">
    <molecule id="Q5CZA5-2"/>
    <property type="protein sequence ID" value="ENSP00000365414.2"/>
    <property type="gene ID" value="ENSG00000204524.7"/>
</dbReference>
<dbReference type="Ensembl" id="ENST00000414468.3">
    <molecule id="Q5CZA5-1"/>
    <property type="protein sequence ID" value="ENSP00000412999.1"/>
    <property type="gene ID" value="ENSG00000204524.7"/>
</dbReference>
<dbReference type="GeneID" id="390980"/>
<dbReference type="KEGG" id="hsa:390980"/>
<dbReference type="MANE-Select" id="ENST00000414468.3">
    <property type="protein sequence ID" value="ENSP00000412999.1"/>
    <property type="RefSeq nucleotide sequence ID" value="NM_001023563.4"/>
    <property type="RefSeq protein sequence ID" value="NP_001018857.2"/>
</dbReference>
<dbReference type="UCSC" id="uc010ygt.3">
    <molecule id="Q5CZA5-1"/>
    <property type="organism name" value="human"/>
</dbReference>
<dbReference type="AGR" id="HGNC:23272"/>
<dbReference type="CTD" id="390980"/>
<dbReference type="GeneCards" id="ZNF805"/>
<dbReference type="HGNC" id="HGNC:23272">
    <property type="gene designation" value="ZNF805"/>
</dbReference>
<dbReference type="HPA" id="ENSG00000204524">
    <property type="expression patterns" value="Low tissue specificity"/>
</dbReference>
<dbReference type="neXtProt" id="NX_Q5CZA5"/>
<dbReference type="OpenTargets" id="ENSG00000204524"/>
<dbReference type="PharmGKB" id="PA162410601"/>
<dbReference type="VEuPathDB" id="HostDB:ENSG00000204524"/>
<dbReference type="eggNOG" id="KOG1721">
    <property type="taxonomic scope" value="Eukaryota"/>
</dbReference>
<dbReference type="GeneTree" id="ENSGT00940000159953"/>
<dbReference type="HOGENOM" id="CLU_002678_5_0_1"/>
<dbReference type="InParanoid" id="Q5CZA5"/>
<dbReference type="OMA" id="HEGCLRP"/>
<dbReference type="OrthoDB" id="6591996at2759"/>
<dbReference type="PAN-GO" id="Q5CZA5">
    <property type="GO annotations" value="4 GO annotations based on evolutionary models"/>
</dbReference>
<dbReference type="PhylomeDB" id="Q5CZA5"/>
<dbReference type="TreeFam" id="TF341817"/>
<dbReference type="PathwayCommons" id="Q5CZA5"/>
<dbReference type="SignaLink" id="Q5CZA5"/>
<dbReference type="BioGRID-ORCS" id="390980">
    <property type="hits" value="9 hits in 1181 CRISPR screens"/>
</dbReference>
<dbReference type="ChiTaRS" id="ZNF805">
    <property type="organism name" value="human"/>
</dbReference>
<dbReference type="GenomeRNAi" id="390980"/>
<dbReference type="Pharos" id="Q5CZA5">
    <property type="development level" value="Tdark"/>
</dbReference>
<dbReference type="PRO" id="PR:Q5CZA5"/>
<dbReference type="Proteomes" id="UP000005640">
    <property type="component" value="Chromosome 19"/>
</dbReference>
<dbReference type="RNAct" id="Q5CZA5">
    <property type="molecule type" value="protein"/>
</dbReference>
<dbReference type="Bgee" id="ENSG00000204524">
    <property type="expression patterns" value="Expressed in calcaneal tendon and 113 other cell types or tissues"/>
</dbReference>
<dbReference type="GO" id="GO:0005634">
    <property type="term" value="C:nucleus"/>
    <property type="evidence" value="ECO:0000318"/>
    <property type="project" value="GO_Central"/>
</dbReference>
<dbReference type="GO" id="GO:0000981">
    <property type="term" value="F:DNA-binding transcription factor activity, RNA polymerase II-specific"/>
    <property type="evidence" value="ECO:0000318"/>
    <property type="project" value="GO_Central"/>
</dbReference>
<dbReference type="GO" id="GO:0000978">
    <property type="term" value="F:RNA polymerase II cis-regulatory region sequence-specific DNA binding"/>
    <property type="evidence" value="ECO:0000318"/>
    <property type="project" value="GO_Central"/>
</dbReference>
<dbReference type="GO" id="GO:0008270">
    <property type="term" value="F:zinc ion binding"/>
    <property type="evidence" value="ECO:0007669"/>
    <property type="project" value="UniProtKB-KW"/>
</dbReference>
<dbReference type="GO" id="GO:0006357">
    <property type="term" value="P:regulation of transcription by RNA polymerase II"/>
    <property type="evidence" value="ECO:0000318"/>
    <property type="project" value="GO_Central"/>
</dbReference>
<dbReference type="CDD" id="cd07765">
    <property type="entry name" value="KRAB_A-box"/>
    <property type="match status" value="1"/>
</dbReference>
<dbReference type="FunFam" id="3.30.160.60:FF:001494">
    <property type="entry name" value="zinc finger protein 10 isoform X2"/>
    <property type="match status" value="1"/>
</dbReference>
<dbReference type="FunFam" id="3.30.160.60:FF:000478">
    <property type="entry name" value="Zinc finger protein 133"/>
    <property type="match status" value="2"/>
</dbReference>
<dbReference type="FunFam" id="3.30.160.60:FF:000352">
    <property type="entry name" value="zinc finger protein 3 homolog"/>
    <property type="match status" value="2"/>
</dbReference>
<dbReference type="FunFam" id="3.30.160.60:FF:000561">
    <property type="entry name" value="Zinc finger protein 30 homolog"/>
    <property type="match status" value="1"/>
</dbReference>
<dbReference type="FunFam" id="3.30.160.60:FF:000087">
    <property type="entry name" value="Zinc finger protein 354B"/>
    <property type="match status" value="1"/>
</dbReference>
<dbReference type="FunFam" id="3.30.160.60:FF:002090">
    <property type="entry name" value="Zinc finger protein 473"/>
    <property type="match status" value="1"/>
</dbReference>
<dbReference type="FunFam" id="3.30.160.60:FF:002254">
    <property type="entry name" value="Zinc finger protein 540"/>
    <property type="match status" value="2"/>
</dbReference>
<dbReference type="FunFam" id="3.30.160.60:FF:000737">
    <property type="entry name" value="Zinc finger protein 565"/>
    <property type="match status" value="1"/>
</dbReference>
<dbReference type="FunFam" id="3.30.160.60:FF:000493">
    <property type="entry name" value="Zinc finger protein 805"/>
    <property type="match status" value="1"/>
</dbReference>
<dbReference type="FunFam" id="3.30.160.60:FF:000896">
    <property type="entry name" value="Zinc finger protein 805"/>
    <property type="match status" value="1"/>
</dbReference>
<dbReference type="Gene3D" id="6.10.140.140">
    <property type="match status" value="1"/>
</dbReference>
<dbReference type="Gene3D" id="3.30.160.60">
    <property type="entry name" value="Classic Zinc Finger"/>
    <property type="match status" value="13"/>
</dbReference>
<dbReference type="InterPro" id="IPR001909">
    <property type="entry name" value="KRAB"/>
</dbReference>
<dbReference type="InterPro" id="IPR036051">
    <property type="entry name" value="KRAB_dom_sf"/>
</dbReference>
<dbReference type="InterPro" id="IPR036236">
    <property type="entry name" value="Znf_C2H2_sf"/>
</dbReference>
<dbReference type="InterPro" id="IPR013087">
    <property type="entry name" value="Znf_C2H2_type"/>
</dbReference>
<dbReference type="PANTHER" id="PTHR24381">
    <property type="entry name" value="ZINC FINGER PROTEIN"/>
    <property type="match status" value="1"/>
</dbReference>
<dbReference type="PANTHER" id="PTHR24381:SF154">
    <property type="entry name" value="ZINC FINGER PROTEIN 550"/>
    <property type="match status" value="1"/>
</dbReference>
<dbReference type="Pfam" id="PF01352">
    <property type="entry name" value="KRAB"/>
    <property type="match status" value="1"/>
</dbReference>
<dbReference type="Pfam" id="PF00096">
    <property type="entry name" value="zf-C2H2"/>
    <property type="match status" value="10"/>
</dbReference>
<dbReference type="Pfam" id="PF13465">
    <property type="entry name" value="zf-H2C2_2"/>
    <property type="match status" value="1"/>
</dbReference>
<dbReference type="SMART" id="SM00349">
    <property type="entry name" value="KRAB"/>
    <property type="match status" value="1"/>
</dbReference>
<dbReference type="SMART" id="SM00355">
    <property type="entry name" value="ZnF_C2H2"/>
    <property type="match status" value="13"/>
</dbReference>
<dbReference type="SUPFAM" id="SSF57667">
    <property type="entry name" value="beta-beta-alpha zinc fingers"/>
    <property type="match status" value="7"/>
</dbReference>
<dbReference type="SUPFAM" id="SSF109640">
    <property type="entry name" value="KRAB domain (Kruppel-associated box)"/>
    <property type="match status" value="1"/>
</dbReference>
<dbReference type="PROSITE" id="PS50805">
    <property type="entry name" value="KRAB"/>
    <property type="match status" value="1"/>
</dbReference>
<dbReference type="PROSITE" id="PS00028">
    <property type="entry name" value="ZINC_FINGER_C2H2_1"/>
    <property type="match status" value="13"/>
</dbReference>
<dbReference type="PROSITE" id="PS50157">
    <property type="entry name" value="ZINC_FINGER_C2H2_2"/>
    <property type="match status" value="13"/>
</dbReference>
<evidence type="ECO:0000250" key="1"/>
<evidence type="ECO:0000255" key="2">
    <source>
        <dbReference type="PROSITE-ProRule" id="PRU00042"/>
    </source>
</evidence>
<evidence type="ECO:0000255" key="3">
    <source>
        <dbReference type="PROSITE-ProRule" id="PRU00119"/>
    </source>
</evidence>
<evidence type="ECO:0000256" key="4">
    <source>
        <dbReference type="SAM" id="MobiDB-lite"/>
    </source>
</evidence>
<evidence type="ECO:0000303" key="5">
    <source>
    </source>
</evidence>
<evidence type="ECO:0000305" key="6"/>
<organism>
    <name type="scientific">Homo sapiens</name>
    <name type="common">Human</name>
    <dbReference type="NCBI Taxonomy" id="9606"/>
    <lineage>
        <taxon>Eukaryota</taxon>
        <taxon>Metazoa</taxon>
        <taxon>Chordata</taxon>
        <taxon>Craniata</taxon>
        <taxon>Vertebrata</taxon>
        <taxon>Euteleostomi</taxon>
        <taxon>Mammalia</taxon>
        <taxon>Eutheria</taxon>
        <taxon>Euarchontoglires</taxon>
        <taxon>Primates</taxon>
        <taxon>Haplorrhini</taxon>
        <taxon>Catarrhini</taxon>
        <taxon>Hominidae</taxon>
        <taxon>Homo</taxon>
    </lineage>
</organism>
<reference key="1">
    <citation type="journal article" date="2004" name="Nat. Genet.">
        <title>Complete sequencing and characterization of 21,243 full-length human cDNAs.</title>
        <authorList>
            <person name="Ota T."/>
            <person name="Suzuki Y."/>
            <person name="Nishikawa T."/>
            <person name="Otsuki T."/>
            <person name="Sugiyama T."/>
            <person name="Irie R."/>
            <person name="Wakamatsu A."/>
            <person name="Hayashi K."/>
            <person name="Sato H."/>
            <person name="Nagai K."/>
            <person name="Kimura K."/>
            <person name="Makita H."/>
            <person name="Sekine M."/>
            <person name="Obayashi M."/>
            <person name="Nishi T."/>
            <person name="Shibahara T."/>
            <person name="Tanaka T."/>
            <person name="Ishii S."/>
            <person name="Yamamoto J."/>
            <person name="Saito K."/>
            <person name="Kawai Y."/>
            <person name="Isono Y."/>
            <person name="Nakamura Y."/>
            <person name="Nagahari K."/>
            <person name="Murakami K."/>
            <person name="Yasuda T."/>
            <person name="Iwayanagi T."/>
            <person name="Wagatsuma M."/>
            <person name="Shiratori A."/>
            <person name="Sudo H."/>
            <person name="Hosoiri T."/>
            <person name="Kaku Y."/>
            <person name="Kodaira H."/>
            <person name="Kondo H."/>
            <person name="Sugawara M."/>
            <person name="Takahashi M."/>
            <person name="Kanda K."/>
            <person name="Yokoi T."/>
            <person name="Furuya T."/>
            <person name="Kikkawa E."/>
            <person name="Omura Y."/>
            <person name="Abe K."/>
            <person name="Kamihara K."/>
            <person name="Katsuta N."/>
            <person name="Sato K."/>
            <person name="Tanikawa M."/>
            <person name="Yamazaki M."/>
            <person name="Ninomiya K."/>
            <person name="Ishibashi T."/>
            <person name="Yamashita H."/>
            <person name="Murakawa K."/>
            <person name="Fujimori K."/>
            <person name="Tanai H."/>
            <person name="Kimata M."/>
            <person name="Watanabe M."/>
            <person name="Hiraoka S."/>
            <person name="Chiba Y."/>
            <person name="Ishida S."/>
            <person name="Ono Y."/>
            <person name="Takiguchi S."/>
            <person name="Watanabe S."/>
            <person name="Yosida M."/>
            <person name="Hotuta T."/>
            <person name="Kusano J."/>
            <person name="Kanehori K."/>
            <person name="Takahashi-Fujii A."/>
            <person name="Hara H."/>
            <person name="Tanase T.-O."/>
            <person name="Nomura Y."/>
            <person name="Togiya S."/>
            <person name="Komai F."/>
            <person name="Hara R."/>
            <person name="Takeuchi K."/>
            <person name="Arita M."/>
            <person name="Imose N."/>
            <person name="Musashino K."/>
            <person name="Yuuki H."/>
            <person name="Oshima A."/>
            <person name="Sasaki N."/>
            <person name="Aotsuka S."/>
            <person name="Yoshikawa Y."/>
            <person name="Matsunawa H."/>
            <person name="Ichihara T."/>
            <person name="Shiohata N."/>
            <person name="Sano S."/>
            <person name="Moriya S."/>
            <person name="Momiyama H."/>
            <person name="Satoh N."/>
            <person name="Takami S."/>
            <person name="Terashima Y."/>
            <person name="Suzuki O."/>
            <person name="Nakagawa S."/>
            <person name="Senoh A."/>
            <person name="Mizoguchi H."/>
            <person name="Goto Y."/>
            <person name="Shimizu F."/>
            <person name="Wakebe H."/>
            <person name="Hishigaki H."/>
            <person name="Watanabe T."/>
            <person name="Sugiyama A."/>
            <person name="Takemoto M."/>
            <person name="Kawakami B."/>
            <person name="Yamazaki M."/>
            <person name="Watanabe K."/>
            <person name="Kumagai A."/>
            <person name="Itakura S."/>
            <person name="Fukuzumi Y."/>
            <person name="Fujimori Y."/>
            <person name="Komiyama M."/>
            <person name="Tashiro H."/>
            <person name="Tanigami A."/>
            <person name="Fujiwara T."/>
            <person name="Ono T."/>
            <person name="Yamada K."/>
            <person name="Fujii Y."/>
            <person name="Ozaki K."/>
            <person name="Hirao M."/>
            <person name="Ohmori Y."/>
            <person name="Kawabata A."/>
            <person name="Hikiji T."/>
            <person name="Kobatake N."/>
            <person name="Inagaki H."/>
            <person name="Ikema Y."/>
            <person name="Okamoto S."/>
            <person name="Okitani R."/>
            <person name="Kawakami T."/>
            <person name="Noguchi S."/>
            <person name="Itoh T."/>
            <person name="Shigeta K."/>
            <person name="Senba T."/>
            <person name="Matsumura K."/>
            <person name="Nakajima Y."/>
            <person name="Mizuno T."/>
            <person name="Morinaga M."/>
            <person name="Sasaki M."/>
            <person name="Togashi T."/>
            <person name="Oyama M."/>
            <person name="Hata H."/>
            <person name="Watanabe M."/>
            <person name="Komatsu T."/>
            <person name="Mizushima-Sugano J."/>
            <person name="Satoh T."/>
            <person name="Shirai Y."/>
            <person name="Takahashi Y."/>
            <person name="Nakagawa K."/>
            <person name="Okumura K."/>
            <person name="Nagase T."/>
            <person name="Nomura N."/>
            <person name="Kikuchi H."/>
            <person name="Masuho Y."/>
            <person name="Yamashita R."/>
            <person name="Nakai K."/>
            <person name="Yada T."/>
            <person name="Nakamura Y."/>
            <person name="Ohara O."/>
            <person name="Isogai T."/>
            <person name="Sugano S."/>
        </authorList>
    </citation>
    <scope>NUCLEOTIDE SEQUENCE [LARGE SCALE MRNA] (ISOFORM 2)</scope>
</reference>
<reference key="2">
    <citation type="journal article" date="2004" name="Nature">
        <title>The DNA sequence and biology of human chromosome 19.</title>
        <authorList>
            <person name="Grimwood J."/>
            <person name="Gordon L.A."/>
            <person name="Olsen A.S."/>
            <person name="Terry A."/>
            <person name="Schmutz J."/>
            <person name="Lamerdin J.E."/>
            <person name="Hellsten U."/>
            <person name="Goodstein D."/>
            <person name="Couronne O."/>
            <person name="Tran-Gyamfi M."/>
            <person name="Aerts A."/>
            <person name="Altherr M."/>
            <person name="Ashworth L."/>
            <person name="Bajorek E."/>
            <person name="Black S."/>
            <person name="Branscomb E."/>
            <person name="Caenepeel S."/>
            <person name="Carrano A.V."/>
            <person name="Caoile C."/>
            <person name="Chan Y.M."/>
            <person name="Christensen M."/>
            <person name="Cleland C.A."/>
            <person name="Copeland A."/>
            <person name="Dalin E."/>
            <person name="Dehal P."/>
            <person name="Denys M."/>
            <person name="Detter J.C."/>
            <person name="Escobar J."/>
            <person name="Flowers D."/>
            <person name="Fotopulos D."/>
            <person name="Garcia C."/>
            <person name="Georgescu A.M."/>
            <person name="Glavina T."/>
            <person name="Gomez M."/>
            <person name="Gonzales E."/>
            <person name="Groza M."/>
            <person name="Hammon N."/>
            <person name="Hawkins T."/>
            <person name="Haydu L."/>
            <person name="Ho I."/>
            <person name="Huang W."/>
            <person name="Israni S."/>
            <person name="Jett J."/>
            <person name="Kadner K."/>
            <person name="Kimball H."/>
            <person name="Kobayashi A."/>
            <person name="Larionov V."/>
            <person name="Leem S.-H."/>
            <person name="Lopez F."/>
            <person name="Lou Y."/>
            <person name="Lowry S."/>
            <person name="Malfatti S."/>
            <person name="Martinez D."/>
            <person name="McCready P.M."/>
            <person name="Medina C."/>
            <person name="Morgan J."/>
            <person name="Nelson K."/>
            <person name="Nolan M."/>
            <person name="Ovcharenko I."/>
            <person name="Pitluck S."/>
            <person name="Pollard M."/>
            <person name="Popkie A.P."/>
            <person name="Predki P."/>
            <person name="Quan G."/>
            <person name="Ramirez L."/>
            <person name="Rash S."/>
            <person name="Retterer J."/>
            <person name="Rodriguez A."/>
            <person name="Rogers S."/>
            <person name="Salamov A."/>
            <person name="Salazar A."/>
            <person name="She X."/>
            <person name="Smith D."/>
            <person name="Slezak T."/>
            <person name="Solovyev V."/>
            <person name="Thayer N."/>
            <person name="Tice H."/>
            <person name="Tsai M."/>
            <person name="Ustaszewska A."/>
            <person name="Vo N."/>
            <person name="Wagner M."/>
            <person name="Wheeler J."/>
            <person name="Wu K."/>
            <person name="Xie G."/>
            <person name="Yang J."/>
            <person name="Dubchak I."/>
            <person name="Furey T.S."/>
            <person name="DeJong P."/>
            <person name="Dickson M."/>
            <person name="Gordon D."/>
            <person name="Eichler E.E."/>
            <person name="Pennacchio L.A."/>
            <person name="Richardson P."/>
            <person name="Stubbs L."/>
            <person name="Rokhsar D.S."/>
            <person name="Myers R.M."/>
            <person name="Rubin E.M."/>
            <person name="Lucas S.M."/>
        </authorList>
    </citation>
    <scope>NUCLEOTIDE SEQUENCE [LARGE SCALE GENOMIC DNA]</scope>
</reference>
<reference key="3">
    <citation type="journal article" date="2007" name="BMC Genomics">
        <title>The full-ORF clone resource of the German cDNA consortium.</title>
        <authorList>
            <person name="Bechtel S."/>
            <person name="Rosenfelder H."/>
            <person name="Duda A."/>
            <person name="Schmidt C.P."/>
            <person name="Ernst U."/>
            <person name="Wellenreuther R."/>
            <person name="Mehrle A."/>
            <person name="Schuster C."/>
            <person name="Bahr A."/>
            <person name="Bloecker H."/>
            <person name="Heubner D."/>
            <person name="Hoerlein A."/>
            <person name="Michel G."/>
            <person name="Wedler H."/>
            <person name="Koehrer K."/>
            <person name="Ottenwaelder B."/>
            <person name="Poustka A."/>
            <person name="Wiemann S."/>
            <person name="Schupp I."/>
        </authorList>
    </citation>
    <scope>NUCLEOTIDE SEQUENCE [LARGE SCALE MRNA] OF 206-627</scope>
    <source>
        <tissue>Fetal kidney</tissue>
    </source>
</reference>
<protein>
    <recommendedName>
        <fullName>Zinc finger protein 805</fullName>
    </recommendedName>
</protein>
<gene>
    <name type="primary">ZNF805</name>
</gene>
<feature type="chain" id="PRO_0000304624" description="Zinc finger protein 805">
    <location>
        <begin position="1"/>
        <end position="627"/>
    </location>
</feature>
<feature type="domain" description="KRAB" evidence="3">
    <location>
        <begin position="13"/>
        <end position="84"/>
    </location>
</feature>
<feature type="zinc finger region" description="C2H2-type 1" evidence="2">
    <location>
        <begin position="203"/>
        <end position="225"/>
    </location>
</feature>
<feature type="zinc finger region" description="C2H2-type 2" evidence="2">
    <location>
        <begin position="231"/>
        <end position="253"/>
    </location>
</feature>
<feature type="zinc finger region" description="C2H2-type 3" evidence="2">
    <location>
        <begin position="259"/>
        <end position="281"/>
    </location>
</feature>
<feature type="zinc finger region" description="C2H2-type 4" evidence="2">
    <location>
        <begin position="287"/>
        <end position="309"/>
    </location>
</feature>
<feature type="zinc finger region" description="C2H2-type 5" evidence="2">
    <location>
        <begin position="315"/>
        <end position="337"/>
    </location>
</feature>
<feature type="zinc finger region" description="C2H2-type 6" evidence="2">
    <location>
        <begin position="343"/>
        <end position="365"/>
    </location>
</feature>
<feature type="zinc finger region" description="C2H2-type 7" evidence="2">
    <location>
        <begin position="371"/>
        <end position="393"/>
    </location>
</feature>
<feature type="zinc finger region" description="C2H2-type 8" evidence="2">
    <location>
        <begin position="399"/>
        <end position="421"/>
    </location>
</feature>
<feature type="zinc finger region" description="C2H2-type 9" evidence="2">
    <location>
        <begin position="427"/>
        <end position="449"/>
    </location>
</feature>
<feature type="zinc finger region" description="C2H2-type 10" evidence="2">
    <location>
        <begin position="455"/>
        <end position="477"/>
    </location>
</feature>
<feature type="zinc finger region" description="C2H2-type 11" evidence="2">
    <location>
        <begin position="483"/>
        <end position="505"/>
    </location>
</feature>
<feature type="zinc finger region" description="C2H2-type 12" evidence="2">
    <location>
        <begin position="511"/>
        <end position="533"/>
    </location>
</feature>
<feature type="zinc finger region" description="C2H2-type 13" evidence="2">
    <location>
        <begin position="539"/>
        <end position="561"/>
    </location>
</feature>
<feature type="region of interest" description="Disordered" evidence="4">
    <location>
        <begin position="71"/>
        <end position="95"/>
    </location>
</feature>
<feature type="region of interest" description="Disordered" evidence="4">
    <location>
        <begin position="113"/>
        <end position="162"/>
    </location>
</feature>
<feature type="compositionally biased region" description="Polar residues" evidence="4">
    <location>
        <begin position="113"/>
        <end position="123"/>
    </location>
</feature>
<feature type="compositionally biased region" description="Basic and acidic residues" evidence="4">
    <location>
        <begin position="135"/>
        <end position="160"/>
    </location>
</feature>
<feature type="splice variant" id="VSP_040823" description="In isoform 2." evidence="5">
    <location>
        <begin position="1"/>
        <end position="133"/>
    </location>
</feature>
<feature type="sequence variant" id="VAR_057454" description="In dbSNP:rs2014572.">
    <original>G</original>
    <variation>E</variation>
    <location>
        <position position="68"/>
    </location>
</feature>
<name>ZN805_HUMAN</name>
<sequence>MAMALTDPAQVSVTFDDVAVTFTQEEWGQLDLAQRTLYQEVMLENCGLLVSLGCPVPRPELIYHLEHGQEPWTRKEDLSQGTCPGDKGKPKSTEPTTCELALSEGISFWGQLTQGASGDSQLGQPKDQDGFSEMQGERLRPGLDSQKEKLPGKMSPKHDGLGTADSVCSRIIQDRVSLGDDVHDCDSHGSGKNPVIQEEENIFKCNECEKVFNKKRLLARHERIHSGVKPYECTECGKTFSKSTYLLQHHMVHTGEKPYKCMECGKAFNRKSHLTQHQRIHSGEKPYKCSECGKAFTHRSTFVLHNRSHTGEKPFVCKECGKAFRDRPGFIRHYIIHSGENPYECFECGKVFKHRSYLMWHQQTHTGEKPYECSECGKAFCESAALIHHYVIHTGEKPFECLECGKAFNHRSYLKRHQRIHTGEKPYVCSECGKAFTHCSTFILHKRAHTGEKPFECKECGKAFSNRADLIRHFSIHTGEKPYECMECGKAFNRRSGLTRHQRIHSGEKPYECIECGKTFCWSTNLIRHSIIHTGEKPYECSECGKAFSRSSSLTQHQRMHTGRNPISVTDVGRPFTSGQTSVNIQELLLGKNFLNVTTEENLLQEEASYMASDRTYQRETPQVSSL</sequence>
<proteinExistence type="evidence at protein level"/>
<accession>Q5CZA5</accession>
<accession>B4DNM5</accession>
<comment type="function">
    <text evidence="1">May be involved in transcriptional regulation.</text>
</comment>
<comment type="subcellular location">
    <subcellularLocation>
        <location evidence="6">Nucleus</location>
    </subcellularLocation>
</comment>
<comment type="alternative products">
    <event type="alternative splicing"/>
    <isoform>
        <id>Q5CZA5-1</id>
        <name>1</name>
        <sequence type="displayed"/>
    </isoform>
    <isoform>
        <id>Q5CZA5-2</id>
        <name>2</name>
        <sequence type="described" ref="VSP_040823"/>
    </isoform>
</comment>
<comment type="miscellaneous">
    <molecule>Isoform 1</molecule>
    <text>Gene prediction based on similarity to orthologs.</text>
</comment>
<comment type="similarity">
    <text evidence="6">Belongs to the krueppel C2H2-type zinc-finger protein family.</text>
</comment>
<comment type="sequence caution" evidence="6">
    <conflict type="erroneous initiation">
        <sequence resource="EMBL-CDS" id="CAI56760"/>
    </conflict>
    <text>Truncated N-terminus.</text>
</comment>
<keyword id="KW-0025">Alternative splicing</keyword>
<keyword id="KW-0238">DNA-binding</keyword>
<keyword id="KW-0479">Metal-binding</keyword>
<keyword id="KW-0539">Nucleus</keyword>
<keyword id="KW-1267">Proteomics identification</keyword>
<keyword id="KW-1185">Reference proteome</keyword>
<keyword id="KW-0677">Repeat</keyword>
<keyword id="KW-0804">Transcription</keyword>
<keyword id="KW-0805">Transcription regulation</keyword>
<keyword id="KW-0862">Zinc</keyword>
<keyword id="KW-0863">Zinc-finger</keyword>